<protein>
    <recommendedName>
        <fullName evidence="1">Probable transcriptional regulatory protein NFA_37020</fullName>
    </recommendedName>
</protein>
<sequence>MSGHSKWATTKHKKAAIDAKRGKLFAKLIKNIEVAARTGGGDPEGNPTLYDAIQKAKKSSVPNDNIERARKRGAGEEAGGADWQTIMYEGYGPNGVAVLIECLTDNRNRAAGEVRVAMTRNGGNMADPGSVAYLFHRKGIVTLEKNGLSEDDVLMAVLDAGAEEVNDLGESFEIISEPGDLVAVRSALQSAGIDYESAESGFQPSVSVAVDAEGARKVFKLIDALEDSDDVQNVYTNVDVSDEVLAQLDTD</sequence>
<comment type="subcellular location">
    <subcellularLocation>
        <location evidence="1">Cytoplasm</location>
    </subcellularLocation>
</comment>
<comment type="similarity">
    <text evidence="1">Belongs to the TACO1 family.</text>
</comment>
<evidence type="ECO:0000255" key="1">
    <source>
        <dbReference type="HAMAP-Rule" id="MF_00693"/>
    </source>
</evidence>
<keyword id="KW-0963">Cytoplasm</keyword>
<keyword id="KW-0238">DNA-binding</keyword>
<keyword id="KW-1185">Reference proteome</keyword>
<keyword id="KW-0804">Transcription</keyword>
<keyword id="KW-0805">Transcription regulation</keyword>
<organism>
    <name type="scientific">Nocardia farcinica (strain IFM 10152)</name>
    <dbReference type="NCBI Taxonomy" id="247156"/>
    <lineage>
        <taxon>Bacteria</taxon>
        <taxon>Bacillati</taxon>
        <taxon>Actinomycetota</taxon>
        <taxon>Actinomycetes</taxon>
        <taxon>Mycobacteriales</taxon>
        <taxon>Nocardiaceae</taxon>
        <taxon>Nocardia</taxon>
    </lineage>
</organism>
<proteinExistence type="inferred from homology"/>
<name>Y3702_NOCFA</name>
<feature type="chain" id="PRO_0000175858" description="Probable transcriptional regulatory protein NFA_37020">
    <location>
        <begin position="1"/>
        <end position="251"/>
    </location>
</feature>
<dbReference type="EMBL" id="AP006618">
    <property type="protein sequence ID" value="BAD58550.1"/>
    <property type="molecule type" value="Genomic_DNA"/>
</dbReference>
<dbReference type="RefSeq" id="WP_011210235.1">
    <property type="nucleotide sequence ID" value="NC_006361.1"/>
</dbReference>
<dbReference type="SMR" id="Q5YTE1"/>
<dbReference type="STRING" id="247156.NFA_37020"/>
<dbReference type="GeneID" id="61134394"/>
<dbReference type="KEGG" id="nfa:NFA_37020"/>
<dbReference type="eggNOG" id="COG0217">
    <property type="taxonomic scope" value="Bacteria"/>
</dbReference>
<dbReference type="HOGENOM" id="CLU_062974_2_2_11"/>
<dbReference type="OrthoDB" id="9781053at2"/>
<dbReference type="Proteomes" id="UP000006820">
    <property type="component" value="Chromosome"/>
</dbReference>
<dbReference type="GO" id="GO:0005829">
    <property type="term" value="C:cytosol"/>
    <property type="evidence" value="ECO:0007669"/>
    <property type="project" value="TreeGrafter"/>
</dbReference>
<dbReference type="GO" id="GO:0003677">
    <property type="term" value="F:DNA binding"/>
    <property type="evidence" value="ECO:0007669"/>
    <property type="project" value="UniProtKB-UniRule"/>
</dbReference>
<dbReference type="GO" id="GO:0006355">
    <property type="term" value="P:regulation of DNA-templated transcription"/>
    <property type="evidence" value="ECO:0007669"/>
    <property type="project" value="UniProtKB-UniRule"/>
</dbReference>
<dbReference type="FunFam" id="1.10.10.200:FF:000002">
    <property type="entry name" value="Probable transcriptional regulatory protein CLM62_37755"/>
    <property type="match status" value="1"/>
</dbReference>
<dbReference type="FunFam" id="3.30.70.980:FF:000006">
    <property type="entry name" value="Probable transcriptional regulatory protein J113_18170"/>
    <property type="match status" value="1"/>
</dbReference>
<dbReference type="Gene3D" id="1.10.10.200">
    <property type="match status" value="1"/>
</dbReference>
<dbReference type="Gene3D" id="3.30.70.980">
    <property type="match status" value="2"/>
</dbReference>
<dbReference type="HAMAP" id="MF_00693">
    <property type="entry name" value="Transcrip_reg_TACO1"/>
    <property type="match status" value="1"/>
</dbReference>
<dbReference type="InterPro" id="IPR017856">
    <property type="entry name" value="Integrase-like_N"/>
</dbReference>
<dbReference type="InterPro" id="IPR048300">
    <property type="entry name" value="TACO1_YebC-like_2nd/3rd_dom"/>
</dbReference>
<dbReference type="InterPro" id="IPR049083">
    <property type="entry name" value="TACO1_YebC_N"/>
</dbReference>
<dbReference type="InterPro" id="IPR002876">
    <property type="entry name" value="Transcrip_reg_TACO1-like"/>
</dbReference>
<dbReference type="InterPro" id="IPR026564">
    <property type="entry name" value="Transcrip_reg_TACO1-like_dom3"/>
</dbReference>
<dbReference type="InterPro" id="IPR029072">
    <property type="entry name" value="YebC-like"/>
</dbReference>
<dbReference type="NCBIfam" id="NF001030">
    <property type="entry name" value="PRK00110.1"/>
    <property type="match status" value="1"/>
</dbReference>
<dbReference type="NCBIfam" id="NF009044">
    <property type="entry name" value="PRK12378.1"/>
    <property type="match status" value="1"/>
</dbReference>
<dbReference type="NCBIfam" id="TIGR01033">
    <property type="entry name" value="YebC/PmpR family DNA-binding transcriptional regulator"/>
    <property type="match status" value="1"/>
</dbReference>
<dbReference type="PANTHER" id="PTHR12532:SF6">
    <property type="entry name" value="TRANSCRIPTIONAL REGULATORY PROTEIN YEBC-RELATED"/>
    <property type="match status" value="1"/>
</dbReference>
<dbReference type="PANTHER" id="PTHR12532">
    <property type="entry name" value="TRANSLATIONAL ACTIVATOR OF CYTOCHROME C OXIDASE 1"/>
    <property type="match status" value="1"/>
</dbReference>
<dbReference type="Pfam" id="PF20772">
    <property type="entry name" value="TACO1_YebC_N"/>
    <property type="match status" value="1"/>
</dbReference>
<dbReference type="Pfam" id="PF01709">
    <property type="entry name" value="Transcrip_reg"/>
    <property type="match status" value="1"/>
</dbReference>
<dbReference type="SUPFAM" id="SSF75625">
    <property type="entry name" value="YebC-like"/>
    <property type="match status" value="1"/>
</dbReference>
<reference key="1">
    <citation type="journal article" date="2004" name="Proc. Natl. Acad. Sci. U.S.A.">
        <title>The complete genomic sequence of Nocardia farcinica IFM 10152.</title>
        <authorList>
            <person name="Ishikawa J."/>
            <person name="Yamashita A."/>
            <person name="Mikami Y."/>
            <person name="Hoshino Y."/>
            <person name="Kurita H."/>
            <person name="Hotta K."/>
            <person name="Shiba T."/>
            <person name="Hattori M."/>
        </authorList>
    </citation>
    <scope>NUCLEOTIDE SEQUENCE [LARGE SCALE GENOMIC DNA]</scope>
    <source>
        <strain>IFM 10152</strain>
    </source>
</reference>
<accession>Q5YTE1</accession>
<gene>
    <name type="ordered locus">NFA_37020</name>
</gene>